<gene>
    <name evidence="1" type="primary">pyrR</name>
    <name type="ordered locus">Gbem_1895</name>
</gene>
<keyword id="KW-0328">Glycosyltransferase</keyword>
<keyword id="KW-1185">Reference proteome</keyword>
<keyword id="KW-0804">Transcription</keyword>
<keyword id="KW-0805">Transcription regulation</keyword>
<keyword id="KW-0808">Transferase</keyword>
<feature type="chain" id="PRO_1000139197" description="Bifunctional protein PyrR">
    <location>
        <begin position="1"/>
        <end position="177"/>
    </location>
</feature>
<feature type="short sequence motif" description="PRPP-binding" evidence="1">
    <location>
        <begin position="99"/>
        <end position="111"/>
    </location>
</feature>
<evidence type="ECO:0000255" key="1">
    <source>
        <dbReference type="HAMAP-Rule" id="MF_01219"/>
    </source>
</evidence>
<sequence>MADNTVILDGSGVKRALTRIAHEVLEKNKGVEGLVLVGIRTGGVFLAQELAERLVEIEGVEVPCGAVDITMYRDDIKGHAEHLPVGKTELPFSIEGKKVVLVDDVLFTGRTIRAAMDALMDQGRASCIQLAVLVDRGHRDLPIRADFVGRNVPTSRSENIVVAFDAGNKPTEVILQK</sequence>
<reference key="1">
    <citation type="submission" date="2008-07" db="EMBL/GenBank/DDBJ databases">
        <title>Complete sequence of Geobacter bemidjiensis BEM.</title>
        <authorList>
            <consortium name="US DOE Joint Genome Institute"/>
            <person name="Lucas S."/>
            <person name="Copeland A."/>
            <person name="Lapidus A."/>
            <person name="Glavina del Rio T."/>
            <person name="Dalin E."/>
            <person name="Tice H."/>
            <person name="Bruce D."/>
            <person name="Goodwin L."/>
            <person name="Pitluck S."/>
            <person name="Kiss H."/>
            <person name="Brettin T."/>
            <person name="Detter J.C."/>
            <person name="Han C."/>
            <person name="Kuske C.R."/>
            <person name="Schmutz J."/>
            <person name="Larimer F."/>
            <person name="Land M."/>
            <person name="Hauser L."/>
            <person name="Kyrpides N."/>
            <person name="Lykidis A."/>
            <person name="Lovley D."/>
            <person name="Richardson P."/>
        </authorList>
    </citation>
    <scope>NUCLEOTIDE SEQUENCE [LARGE SCALE GENOMIC DNA]</scope>
    <source>
        <strain>ATCC BAA-1014 / DSM 16622 / JCM 12645 / Bem</strain>
    </source>
</reference>
<protein>
    <recommendedName>
        <fullName evidence="1">Bifunctional protein PyrR</fullName>
    </recommendedName>
    <domain>
        <recommendedName>
            <fullName evidence="1">Pyrimidine operon regulatory protein</fullName>
        </recommendedName>
    </domain>
    <domain>
        <recommendedName>
            <fullName evidence="1">Uracil phosphoribosyltransferase</fullName>
            <shortName evidence="1">UPRTase</shortName>
            <ecNumber evidence="1">2.4.2.9</ecNumber>
        </recommendedName>
    </domain>
</protein>
<dbReference type="EC" id="2.4.2.9" evidence="1"/>
<dbReference type="EMBL" id="CP001124">
    <property type="protein sequence ID" value="ACH38909.1"/>
    <property type="molecule type" value="Genomic_DNA"/>
</dbReference>
<dbReference type="RefSeq" id="WP_012530327.1">
    <property type="nucleotide sequence ID" value="NC_011146.1"/>
</dbReference>
<dbReference type="SMR" id="B5EB48"/>
<dbReference type="STRING" id="404380.Gbem_1895"/>
<dbReference type="KEGG" id="gbm:Gbem_1895"/>
<dbReference type="eggNOG" id="COG2065">
    <property type="taxonomic scope" value="Bacteria"/>
</dbReference>
<dbReference type="HOGENOM" id="CLU_094234_2_1_7"/>
<dbReference type="OrthoDB" id="9802227at2"/>
<dbReference type="Proteomes" id="UP000008825">
    <property type="component" value="Chromosome"/>
</dbReference>
<dbReference type="GO" id="GO:0004845">
    <property type="term" value="F:uracil phosphoribosyltransferase activity"/>
    <property type="evidence" value="ECO:0007669"/>
    <property type="project" value="UniProtKB-UniRule"/>
</dbReference>
<dbReference type="GO" id="GO:0006355">
    <property type="term" value="P:regulation of DNA-templated transcription"/>
    <property type="evidence" value="ECO:0007669"/>
    <property type="project" value="UniProtKB-UniRule"/>
</dbReference>
<dbReference type="CDD" id="cd06223">
    <property type="entry name" value="PRTases_typeI"/>
    <property type="match status" value="1"/>
</dbReference>
<dbReference type="FunFam" id="3.40.50.2020:FF:000020">
    <property type="entry name" value="Bifunctional protein PyrR"/>
    <property type="match status" value="1"/>
</dbReference>
<dbReference type="Gene3D" id="3.40.50.2020">
    <property type="match status" value="1"/>
</dbReference>
<dbReference type="HAMAP" id="MF_01219">
    <property type="entry name" value="PyrR"/>
    <property type="match status" value="1"/>
</dbReference>
<dbReference type="InterPro" id="IPR000836">
    <property type="entry name" value="PRibTrfase_dom"/>
</dbReference>
<dbReference type="InterPro" id="IPR029057">
    <property type="entry name" value="PRTase-like"/>
</dbReference>
<dbReference type="InterPro" id="IPR023050">
    <property type="entry name" value="PyrR"/>
</dbReference>
<dbReference type="InterPro" id="IPR050137">
    <property type="entry name" value="PyrR_bifunctional"/>
</dbReference>
<dbReference type="NCBIfam" id="NF003545">
    <property type="entry name" value="PRK05205.1-1"/>
    <property type="match status" value="1"/>
</dbReference>
<dbReference type="NCBIfam" id="NF003548">
    <property type="entry name" value="PRK05205.1-4"/>
    <property type="match status" value="1"/>
</dbReference>
<dbReference type="NCBIfam" id="NF003549">
    <property type="entry name" value="PRK05205.1-5"/>
    <property type="match status" value="1"/>
</dbReference>
<dbReference type="PANTHER" id="PTHR11608">
    <property type="entry name" value="BIFUNCTIONAL PROTEIN PYRR"/>
    <property type="match status" value="1"/>
</dbReference>
<dbReference type="PANTHER" id="PTHR11608:SF0">
    <property type="entry name" value="BIFUNCTIONAL PROTEIN PYRR"/>
    <property type="match status" value="1"/>
</dbReference>
<dbReference type="Pfam" id="PF00156">
    <property type="entry name" value="Pribosyltran"/>
    <property type="match status" value="1"/>
</dbReference>
<dbReference type="SUPFAM" id="SSF53271">
    <property type="entry name" value="PRTase-like"/>
    <property type="match status" value="1"/>
</dbReference>
<name>PYRR_CITBB</name>
<accession>B5EB48</accession>
<proteinExistence type="inferred from homology"/>
<comment type="function">
    <text evidence="1">Regulates the transcription of the pyrimidine nucleotide (pyr) operon in response to exogenous pyrimidines.</text>
</comment>
<comment type="function">
    <text evidence="1">Also displays a weak uracil phosphoribosyltransferase activity which is not physiologically significant.</text>
</comment>
<comment type="catalytic activity">
    <reaction evidence="1">
        <text>UMP + diphosphate = 5-phospho-alpha-D-ribose 1-diphosphate + uracil</text>
        <dbReference type="Rhea" id="RHEA:13017"/>
        <dbReference type="ChEBI" id="CHEBI:17568"/>
        <dbReference type="ChEBI" id="CHEBI:33019"/>
        <dbReference type="ChEBI" id="CHEBI:57865"/>
        <dbReference type="ChEBI" id="CHEBI:58017"/>
        <dbReference type="EC" id="2.4.2.9"/>
    </reaction>
</comment>
<comment type="similarity">
    <text evidence="1">Belongs to the purine/pyrimidine phosphoribosyltransferase family. PyrR subfamily.</text>
</comment>
<organism>
    <name type="scientific">Citrifermentans bemidjiense (strain ATCC BAA-1014 / DSM 16622 / JCM 12645 / Bem)</name>
    <name type="common">Geobacter bemidjiensis</name>
    <dbReference type="NCBI Taxonomy" id="404380"/>
    <lineage>
        <taxon>Bacteria</taxon>
        <taxon>Pseudomonadati</taxon>
        <taxon>Thermodesulfobacteriota</taxon>
        <taxon>Desulfuromonadia</taxon>
        <taxon>Geobacterales</taxon>
        <taxon>Geobacteraceae</taxon>
        <taxon>Citrifermentans</taxon>
    </lineage>
</organism>